<organism>
    <name type="scientific">Yersinia pseudotuberculosis serotype IB (strain PB1/+)</name>
    <dbReference type="NCBI Taxonomy" id="502801"/>
    <lineage>
        <taxon>Bacteria</taxon>
        <taxon>Pseudomonadati</taxon>
        <taxon>Pseudomonadota</taxon>
        <taxon>Gammaproteobacteria</taxon>
        <taxon>Enterobacterales</taxon>
        <taxon>Yersiniaceae</taxon>
        <taxon>Yersinia</taxon>
    </lineage>
</organism>
<dbReference type="EC" id="2.8.1.1" evidence="1"/>
<dbReference type="EMBL" id="CP001048">
    <property type="protein sequence ID" value="ACC90922.1"/>
    <property type="molecule type" value="Genomic_DNA"/>
</dbReference>
<dbReference type="RefSeq" id="WP_002218928.1">
    <property type="nucleotide sequence ID" value="NZ_CP009780.1"/>
</dbReference>
<dbReference type="SMR" id="B2K5W3"/>
<dbReference type="KEGG" id="ypb:YPTS_3973"/>
<dbReference type="PATRIC" id="fig|502801.10.peg.3439"/>
<dbReference type="GO" id="GO:0005737">
    <property type="term" value="C:cytoplasm"/>
    <property type="evidence" value="ECO:0007669"/>
    <property type="project" value="UniProtKB-SubCell"/>
</dbReference>
<dbReference type="GO" id="GO:0004792">
    <property type="term" value="F:thiosulfate-cyanide sulfurtransferase activity"/>
    <property type="evidence" value="ECO:0007669"/>
    <property type="project" value="UniProtKB-UniRule"/>
</dbReference>
<dbReference type="GO" id="GO:0006071">
    <property type="term" value="P:glycerol metabolic process"/>
    <property type="evidence" value="ECO:0007669"/>
    <property type="project" value="UniProtKB-UniRule"/>
</dbReference>
<dbReference type="CDD" id="cd01444">
    <property type="entry name" value="GlpE_ST"/>
    <property type="match status" value="1"/>
</dbReference>
<dbReference type="Gene3D" id="3.40.250.10">
    <property type="entry name" value="Rhodanese-like domain"/>
    <property type="match status" value="1"/>
</dbReference>
<dbReference type="HAMAP" id="MF_01009">
    <property type="entry name" value="Thiosulf_sulfurtr"/>
    <property type="match status" value="1"/>
</dbReference>
<dbReference type="InterPro" id="IPR050229">
    <property type="entry name" value="GlpE_sulfurtransferase"/>
</dbReference>
<dbReference type="InterPro" id="IPR001763">
    <property type="entry name" value="Rhodanese-like_dom"/>
</dbReference>
<dbReference type="InterPro" id="IPR036873">
    <property type="entry name" value="Rhodanese-like_dom_sf"/>
</dbReference>
<dbReference type="InterPro" id="IPR023695">
    <property type="entry name" value="Thiosulf_sulfurTrfase"/>
</dbReference>
<dbReference type="NCBIfam" id="NF001195">
    <property type="entry name" value="PRK00162.1"/>
    <property type="match status" value="1"/>
</dbReference>
<dbReference type="PANTHER" id="PTHR43031">
    <property type="entry name" value="FAD-DEPENDENT OXIDOREDUCTASE"/>
    <property type="match status" value="1"/>
</dbReference>
<dbReference type="PANTHER" id="PTHR43031:SF6">
    <property type="entry name" value="THIOSULFATE SULFURTRANSFERASE GLPE"/>
    <property type="match status" value="1"/>
</dbReference>
<dbReference type="Pfam" id="PF00581">
    <property type="entry name" value="Rhodanese"/>
    <property type="match status" value="1"/>
</dbReference>
<dbReference type="SMART" id="SM00450">
    <property type="entry name" value="RHOD"/>
    <property type="match status" value="1"/>
</dbReference>
<dbReference type="SUPFAM" id="SSF52821">
    <property type="entry name" value="Rhodanese/Cell cycle control phosphatase"/>
    <property type="match status" value="1"/>
</dbReference>
<dbReference type="PROSITE" id="PS50206">
    <property type="entry name" value="RHODANESE_3"/>
    <property type="match status" value="1"/>
</dbReference>
<evidence type="ECO:0000255" key="1">
    <source>
        <dbReference type="HAMAP-Rule" id="MF_01009"/>
    </source>
</evidence>
<reference key="1">
    <citation type="submission" date="2008-04" db="EMBL/GenBank/DDBJ databases">
        <title>Complete sequence of Yersinia pseudotuberculosis PB1/+.</title>
        <authorList>
            <person name="Copeland A."/>
            <person name="Lucas S."/>
            <person name="Lapidus A."/>
            <person name="Glavina del Rio T."/>
            <person name="Dalin E."/>
            <person name="Tice H."/>
            <person name="Bruce D."/>
            <person name="Goodwin L."/>
            <person name="Pitluck S."/>
            <person name="Munk A.C."/>
            <person name="Brettin T."/>
            <person name="Detter J.C."/>
            <person name="Han C."/>
            <person name="Tapia R."/>
            <person name="Schmutz J."/>
            <person name="Larimer F."/>
            <person name="Land M."/>
            <person name="Hauser L."/>
            <person name="Challacombe J.F."/>
            <person name="Green L."/>
            <person name="Lindler L.E."/>
            <person name="Nikolich M.P."/>
            <person name="Richardson P."/>
        </authorList>
    </citation>
    <scope>NUCLEOTIDE SEQUENCE [LARGE SCALE GENOMIC DNA]</scope>
    <source>
        <strain>PB1/+</strain>
    </source>
</reference>
<gene>
    <name evidence="1" type="primary">glpE</name>
    <name type="ordered locus">YPTS_3973</name>
</gene>
<keyword id="KW-0963">Cytoplasm</keyword>
<keyword id="KW-0808">Transferase</keyword>
<sequence length="109" mass="12316">MEQFEAISVEQAYLRWKEGKTALVDIRDPQSYEAGHAPGAFHLTNSSLHTFMQQTDFDQPVMVMCYHGNSSKGAAQYLLQQGFDVVYSIDGGFEAWARSYPQDITSESR</sequence>
<feature type="chain" id="PRO_1000190114" description="Thiosulfate sulfurtransferase GlpE">
    <location>
        <begin position="1"/>
        <end position="109"/>
    </location>
</feature>
<feature type="domain" description="Rhodanese" evidence="1">
    <location>
        <begin position="17"/>
        <end position="105"/>
    </location>
</feature>
<feature type="active site" description="Cysteine persulfide intermediate" evidence="1">
    <location>
        <position position="65"/>
    </location>
</feature>
<name>GLPE_YERPB</name>
<protein>
    <recommendedName>
        <fullName evidence="1">Thiosulfate sulfurtransferase GlpE</fullName>
        <ecNumber evidence="1">2.8.1.1</ecNumber>
    </recommendedName>
</protein>
<proteinExistence type="inferred from homology"/>
<accession>B2K5W3</accession>
<comment type="function">
    <text evidence="1">Transferase that catalyzes the transfer of sulfur from thiosulfate to thiophilic acceptors such as cyanide or dithiols. May function in a CysM-independent thiosulfate assimilation pathway by catalyzing the conversion of thiosulfate to sulfite, which can then be used for L-cysteine biosynthesis.</text>
</comment>
<comment type="catalytic activity">
    <reaction evidence="1">
        <text>thiosulfate + hydrogen cyanide = thiocyanate + sulfite + 2 H(+)</text>
        <dbReference type="Rhea" id="RHEA:16881"/>
        <dbReference type="ChEBI" id="CHEBI:15378"/>
        <dbReference type="ChEBI" id="CHEBI:17359"/>
        <dbReference type="ChEBI" id="CHEBI:18022"/>
        <dbReference type="ChEBI" id="CHEBI:18407"/>
        <dbReference type="ChEBI" id="CHEBI:33542"/>
        <dbReference type="EC" id="2.8.1.1"/>
    </reaction>
</comment>
<comment type="catalytic activity">
    <reaction evidence="1">
        <text>thiosulfate + [thioredoxin]-dithiol = [thioredoxin]-disulfide + hydrogen sulfide + sulfite + 2 H(+)</text>
        <dbReference type="Rhea" id="RHEA:83859"/>
        <dbReference type="Rhea" id="RHEA-COMP:10698"/>
        <dbReference type="Rhea" id="RHEA-COMP:10700"/>
        <dbReference type="ChEBI" id="CHEBI:15378"/>
        <dbReference type="ChEBI" id="CHEBI:17359"/>
        <dbReference type="ChEBI" id="CHEBI:29919"/>
        <dbReference type="ChEBI" id="CHEBI:29950"/>
        <dbReference type="ChEBI" id="CHEBI:33542"/>
        <dbReference type="ChEBI" id="CHEBI:50058"/>
    </reaction>
</comment>
<comment type="subcellular location">
    <subcellularLocation>
        <location evidence="1">Cytoplasm</location>
    </subcellularLocation>
</comment>
<comment type="similarity">
    <text evidence="1">Belongs to the GlpE family.</text>
</comment>